<dbReference type="EC" id="5.6.1.7" evidence="1"/>
<dbReference type="EMBL" id="AE006469">
    <property type="protein sequence ID" value="AAK65053.1"/>
    <property type="molecule type" value="Genomic_DNA"/>
</dbReference>
<dbReference type="PIR" id="C95311">
    <property type="entry name" value="C95311"/>
</dbReference>
<dbReference type="RefSeq" id="NP_435641.1">
    <property type="nucleotide sequence ID" value="NC_003037.1"/>
</dbReference>
<dbReference type="SMR" id="Q92ZQ4"/>
<dbReference type="EnsemblBacteria" id="AAK65053">
    <property type="protein sequence ID" value="AAK65053"/>
    <property type="gene ID" value="SMa0744"/>
</dbReference>
<dbReference type="KEGG" id="sme:SMa0744"/>
<dbReference type="PATRIC" id="fig|266834.11.peg.411"/>
<dbReference type="HOGENOM" id="CLU_016503_3_0_5"/>
<dbReference type="OrthoDB" id="9766614at2"/>
<dbReference type="PRO" id="PR:Q92ZQ4"/>
<dbReference type="Proteomes" id="UP000001976">
    <property type="component" value="Plasmid pSymA"/>
</dbReference>
<dbReference type="GO" id="GO:0005737">
    <property type="term" value="C:cytoplasm"/>
    <property type="evidence" value="ECO:0007669"/>
    <property type="project" value="UniProtKB-SubCell"/>
</dbReference>
<dbReference type="GO" id="GO:0005524">
    <property type="term" value="F:ATP binding"/>
    <property type="evidence" value="ECO:0007669"/>
    <property type="project" value="UniProtKB-UniRule"/>
</dbReference>
<dbReference type="GO" id="GO:0140662">
    <property type="term" value="F:ATP-dependent protein folding chaperone"/>
    <property type="evidence" value="ECO:0007669"/>
    <property type="project" value="InterPro"/>
</dbReference>
<dbReference type="GO" id="GO:0016853">
    <property type="term" value="F:isomerase activity"/>
    <property type="evidence" value="ECO:0007669"/>
    <property type="project" value="UniProtKB-KW"/>
</dbReference>
<dbReference type="GO" id="GO:0051082">
    <property type="term" value="F:unfolded protein binding"/>
    <property type="evidence" value="ECO:0007669"/>
    <property type="project" value="UniProtKB-UniRule"/>
</dbReference>
<dbReference type="GO" id="GO:0042026">
    <property type="term" value="P:protein refolding"/>
    <property type="evidence" value="ECO:0007669"/>
    <property type="project" value="UniProtKB-UniRule"/>
</dbReference>
<dbReference type="CDD" id="cd03344">
    <property type="entry name" value="GroEL"/>
    <property type="match status" value="1"/>
</dbReference>
<dbReference type="FunFam" id="1.10.560.10:FF:000001">
    <property type="entry name" value="60 kDa chaperonin"/>
    <property type="match status" value="1"/>
</dbReference>
<dbReference type="FunFam" id="3.50.7.10:FF:000001">
    <property type="entry name" value="60 kDa chaperonin"/>
    <property type="match status" value="1"/>
</dbReference>
<dbReference type="Gene3D" id="3.50.7.10">
    <property type="entry name" value="GroEL"/>
    <property type="match status" value="1"/>
</dbReference>
<dbReference type="Gene3D" id="1.10.560.10">
    <property type="entry name" value="GroEL-like equatorial domain"/>
    <property type="match status" value="1"/>
</dbReference>
<dbReference type="Gene3D" id="3.30.260.10">
    <property type="entry name" value="TCP-1-like chaperonin intermediate domain"/>
    <property type="match status" value="1"/>
</dbReference>
<dbReference type="HAMAP" id="MF_00600">
    <property type="entry name" value="CH60"/>
    <property type="match status" value="1"/>
</dbReference>
<dbReference type="InterPro" id="IPR018370">
    <property type="entry name" value="Chaperonin_Cpn60_CS"/>
</dbReference>
<dbReference type="InterPro" id="IPR001844">
    <property type="entry name" value="Cpn60/GroEL"/>
</dbReference>
<dbReference type="InterPro" id="IPR002423">
    <property type="entry name" value="Cpn60/GroEL/TCP-1"/>
</dbReference>
<dbReference type="InterPro" id="IPR027409">
    <property type="entry name" value="GroEL-like_apical_dom_sf"/>
</dbReference>
<dbReference type="InterPro" id="IPR027413">
    <property type="entry name" value="GROEL-like_equatorial_sf"/>
</dbReference>
<dbReference type="InterPro" id="IPR027410">
    <property type="entry name" value="TCP-1-like_intermed_sf"/>
</dbReference>
<dbReference type="NCBIfam" id="TIGR02348">
    <property type="entry name" value="GroEL"/>
    <property type="match status" value="1"/>
</dbReference>
<dbReference type="NCBIfam" id="NF000592">
    <property type="entry name" value="PRK00013.1"/>
    <property type="match status" value="1"/>
</dbReference>
<dbReference type="NCBIfam" id="NF009487">
    <property type="entry name" value="PRK12849.1"/>
    <property type="match status" value="1"/>
</dbReference>
<dbReference type="NCBIfam" id="NF009488">
    <property type="entry name" value="PRK12850.1"/>
    <property type="match status" value="1"/>
</dbReference>
<dbReference type="NCBIfam" id="NF009489">
    <property type="entry name" value="PRK12851.1"/>
    <property type="match status" value="1"/>
</dbReference>
<dbReference type="PANTHER" id="PTHR45633">
    <property type="entry name" value="60 KDA HEAT SHOCK PROTEIN, MITOCHONDRIAL"/>
    <property type="match status" value="1"/>
</dbReference>
<dbReference type="Pfam" id="PF00118">
    <property type="entry name" value="Cpn60_TCP1"/>
    <property type="match status" value="1"/>
</dbReference>
<dbReference type="PRINTS" id="PR00298">
    <property type="entry name" value="CHAPERONIN60"/>
</dbReference>
<dbReference type="SUPFAM" id="SSF52029">
    <property type="entry name" value="GroEL apical domain-like"/>
    <property type="match status" value="1"/>
</dbReference>
<dbReference type="SUPFAM" id="SSF48592">
    <property type="entry name" value="GroEL equatorial domain-like"/>
    <property type="match status" value="1"/>
</dbReference>
<dbReference type="SUPFAM" id="SSF54849">
    <property type="entry name" value="GroEL-intermediate domain like"/>
    <property type="match status" value="1"/>
</dbReference>
<dbReference type="PROSITE" id="PS00296">
    <property type="entry name" value="CHAPERONINS_CPN60"/>
    <property type="match status" value="1"/>
</dbReference>
<keyword id="KW-0067">ATP-binding</keyword>
<keyword id="KW-0143">Chaperone</keyword>
<keyword id="KW-0963">Cytoplasm</keyword>
<keyword id="KW-0413">Isomerase</keyword>
<keyword id="KW-0547">Nucleotide-binding</keyword>
<keyword id="KW-0614">Plasmid</keyword>
<keyword id="KW-1185">Reference proteome</keyword>
<keyword id="KW-0346">Stress response</keyword>
<feature type="chain" id="PRO_0000063503" description="Chaperonin GroEL 4">
    <location>
        <begin position="1"/>
        <end position="545"/>
    </location>
</feature>
<feature type="binding site" evidence="1">
    <location>
        <begin position="30"/>
        <end position="33"/>
    </location>
    <ligand>
        <name>ATP</name>
        <dbReference type="ChEBI" id="CHEBI:30616"/>
    </ligand>
</feature>
<feature type="binding site" evidence="1">
    <location>
        <position position="51"/>
    </location>
    <ligand>
        <name>ATP</name>
        <dbReference type="ChEBI" id="CHEBI:30616"/>
    </ligand>
</feature>
<feature type="binding site" evidence="1">
    <location>
        <begin position="87"/>
        <end position="91"/>
    </location>
    <ligand>
        <name>ATP</name>
        <dbReference type="ChEBI" id="CHEBI:30616"/>
    </ligand>
</feature>
<feature type="binding site" evidence="1">
    <location>
        <position position="415"/>
    </location>
    <ligand>
        <name>ATP</name>
        <dbReference type="ChEBI" id="CHEBI:30616"/>
    </ligand>
</feature>
<feature type="binding site" evidence="1">
    <location>
        <position position="495"/>
    </location>
    <ligand>
        <name>ATP</name>
        <dbReference type="ChEBI" id="CHEBI:30616"/>
    </ligand>
</feature>
<proteinExistence type="inferred from homology"/>
<protein>
    <recommendedName>
        <fullName evidence="1">Chaperonin GroEL 4</fullName>
        <ecNumber evidence="1">5.6.1.7</ecNumber>
    </recommendedName>
    <alternativeName>
        <fullName evidence="1">60 kDa chaperonin 4</fullName>
    </alternativeName>
    <alternativeName>
        <fullName evidence="1">Chaperonin-60 4</fullName>
        <shortName evidence="1">Cpn60 4</shortName>
    </alternativeName>
</protein>
<organism>
    <name type="scientific">Rhizobium meliloti (strain 1021)</name>
    <name type="common">Ensifer meliloti</name>
    <name type="synonym">Sinorhizobium meliloti</name>
    <dbReference type="NCBI Taxonomy" id="266834"/>
    <lineage>
        <taxon>Bacteria</taxon>
        <taxon>Pseudomonadati</taxon>
        <taxon>Pseudomonadota</taxon>
        <taxon>Alphaproteobacteria</taxon>
        <taxon>Hyphomicrobiales</taxon>
        <taxon>Rhizobiaceae</taxon>
        <taxon>Sinorhizobium/Ensifer group</taxon>
        <taxon>Sinorhizobium</taxon>
    </lineage>
</organism>
<name>CH604_RHIME</name>
<reference key="1">
    <citation type="journal article" date="2001" name="Proc. Natl. Acad. Sci. U.S.A.">
        <title>Nucleotide sequence and predicted functions of the entire Sinorhizobium meliloti pSymA megaplasmid.</title>
        <authorList>
            <person name="Barnett M.J."/>
            <person name="Fisher R.F."/>
            <person name="Jones T."/>
            <person name="Komp C."/>
            <person name="Abola A.P."/>
            <person name="Barloy-Hubler F."/>
            <person name="Bowser L."/>
            <person name="Capela D."/>
            <person name="Galibert F."/>
            <person name="Gouzy J."/>
            <person name="Gurjal M."/>
            <person name="Hong A."/>
            <person name="Huizar L."/>
            <person name="Hyman R.W."/>
            <person name="Kahn D."/>
            <person name="Kahn M.L."/>
            <person name="Kalman S."/>
            <person name="Keating D.H."/>
            <person name="Palm C."/>
            <person name="Peck M.C."/>
            <person name="Surzycki R."/>
            <person name="Wells D.H."/>
            <person name="Yeh K.-C."/>
            <person name="Davis R.W."/>
            <person name="Federspiel N.A."/>
            <person name="Long S.R."/>
        </authorList>
    </citation>
    <scope>NUCLEOTIDE SEQUENCE [LARGE SCALE GENOMIC DNA]</scope>
    <source>
        <strain>1021</strain>
    </source>
</reference>
<reference key="2">
    <citation type="journal article" date="2001" name="Science">
        <title>The composite genome of the legume symbiont Sinorhizobium meliloti.</title>
        <authorList>
            <person name="Galibert F."/>
            <person name="Finan T.M."/>
            <person name="Long S.R."/>
            <person name="Puehler A."/>
            <person name="Abola P."/>
            <person name="Ampe F."/>
            <person name="Barloy-Hubler F."/>
            <person name="Barnett M.J."/>
            <person name="Becker A."/>
            <person name="Boistard P."/>
            <person name="Bothe G."/>
            <person name="Boutry M."/>
            <person name="Bowser L."/>
            <person name="Buhrmester J."/>
            <person name="Cadieu E."/>
            <person name="Capela D."/>
            <person name="Chain P."/>
            <person name="Cowie A."/>
            <person name="Davis R.W."/>
            <person name="Dreano S."/>
            <person name="Federspiel N.A."/>
            <person name="Fisher R.F."/>
            <person name="Gloux S."/>
            <person name="Godrie T."/>
            <person name="Goffeau A."/>
            <person name="Golding B."/>
            <person name="Gouzy J."/>
            <person name="Gurjal M."/>
            <person name="Hernandez-Lucas I."/>
            <person name="Hong A."/>
            <person name="Huizar L."/>
            <person name="Hyman R.W."/>
            <person name="Jones T."/>
            <person name="Kahn D."/>
            <person name="Kahn M.L."/>
            <person name="Kalman S."/>
            <person name="Keating D.H."/>
            <person name="Kiss E."/>
            <person name="Komp C."/>
            <person name="Lelaure V."/>
            <person name="Masuy D."/>
            <person name="Palm C."/>
            <person name="Peck M.C."/>
            <person name="Pohl T.M."/>
            <person name="Portetelle D."/>
            <person name="Purnelle B."/>
            <person name="Ramsperger U."/>
            <person name="Surzycki R."/>
            <person name="Thebault P."/>
            <person name="Vandenbol M."/>
            <person name="Vorhoelter F.J."/>
            <person name="Weidner S."/>
            <person name="Wells D.H."/>
            <person name="Wong K."/>
            <person name="Yeh K.-C."/>
            <person name="Batut J."/>
        </authorList>
    </citation>
    <scope>NUCLEOTIDE SEQUENCE [LARGE SCALE GENOMIC DNA]</scope>
    <source>
        <strain>1021</strain>
    </source>
</reference>
<accession>Q92ZQ4</accession>
<sequence>MAAKEVKFGRSAREKMLRGVDILADAVKVTLGPKGRNVVIDKSFGAPRITKDGVTVAKEIELEDKFENMGAQMVREVASKTNDIAGDGTTTATVLAQAIVREGAKAVAAGMNPMDLKRGIDLAVAEVVKDLLAKAKKINTSDEVAQVGTISANGEKQIGLDIAEAMQKVGNEGVITVEEAKTAETELEVVEGMQFDRGYLSPYFVTNPEKMVADLEDAFILLHEKKLSNLQAMLPVLEAVVQTGKPLLIIAEDVEGEALATLVVNKLRGGLKIAAVKAPGFGDRRKAMLEDIAILTGGTVISEDLGIKLESVTLDMLGRAKKVSITKENTTIVDGAGQKSDIEGRVAQIKAQIEETTSDYDREKLQERLAKLAGGVAVIRVGGATEVEVKEKKDRIDDALNATRAAVQEGIVPGGGVALLRSSVKITVKGENDDQDAGVNIVRRALQSPARQIVENAGDEASIVVGKILEKNTDDFGYNAQTGEYGDMIAMGIIDPVKVVRTALQDAASVASLLITTEAMIAELPKKDAPAMPGGMGGMGGMDMM</sequence>
<geneLocation type="plasmid">
    <name>pSymA</name>
    <name>megaplasmid 1</name>
</geneLocation>
<comment type="function">
    <text evidence="1">Together with its co-chaperonin GroES, plays an essential role in assisting protein folding. The GroEL-GroES system forms a nano-cage that allows encapsulation of the non-native substrate proteins and provides a physical environment optimized to promote and accelerate protein folding.</text>
</comment>
<comment type="catalytic activity">
    <reaction evidence="1">
        <text>ATP + H2O + a folded polypeptide = ADP + phosphate + an unfolded polypeptide.</text>
        <dbReference type="EC" id="5.6.1.7"/>
    </reaction>
</comment>
<comment type="subunit">
    <text evidence="1">Forms a cylinder of 14 subunits composed of two heptameric rings stacked back-to-back. Interacts with the co-chaperonin GroES.</text>
</comment>
<comment type="subcellular location">
    <subcellularLocation>
        <location evidence="1">Cytoplasm</location>
    </subcellularLocation>
</comment>
<comment type="similarity">
    <text evidence="1">Belongs to the chaperonin (HSP60) family.</text>
</comment>
<gene>
    <name evidence="1" type="primary">groEL4</name>
    <name evidence="1" type="synonym">groL4</name>
    <name type="ordered locus">RA0395</name>
    <name type="ORF">SMa0744</name>
</gene>
<evidence type="ECO:0000255" key="1">
    <source>
        <dbReference type="HAMAP-Rule" id="MF_00600"/>
    </source>
</evidence>